<name>DDX6L_HUMAN</name>
<dbReference type="EC" id="3.6.4.13"/>
<dbReference type="EMBL" id="AL832950">
    <property type="status" value="NOT_ANNOTATED_CDS"/>
    <property type="molecule type" value="mRNA"/>
</dbReference>
<dbReference type="EMBL" id="CR933601">
    <property type="protein sequence ID" value="CAI45925.1"/>
    <property type="molecule type" value="mRNA"/>
</dbReference>
<dbReference type="EMBL" id="AC079926">
    <property type="status" value="NOT_ANNOTATED_CDS"/>
    <property type="molecule type" value="Genomic_DNA"/>
</dbReference>
<dbReference type="EMBL" id="AC093888">
    <property type="status" value="NOT_ANNOTATED_CDS"/>
    <property type="molecule type" value="Genomic_DNA"/>
</dbReference>
<dbReference type="EMBL" id="KF457833">
    <property type="status" value="NOT_ANNOTATED_CDS"/>
    <property type="molecule type" value="Genomic_DNA"/>
</dbReference>
<dbReference type="EMBL" id="AK055595">
    <property type="protein sequence ID" value="BAB70966.1"/>
    <property type="status" value="ALT_INIT"/>
    <property type="molecule type" value="mRNA"/>
</dbReference>
<dbReference type="CCDS" id="CCDS47161.1">
    <molecule id="Q5H9U9-1"/>
</dbReference>
<dbReference type="RefSeq" id="NP_001012985.2">
    <molecule id="Q5H9U9-1"/>
    <property type="nucleotide sequence ID" value="NM_001012967.3"/>
</dbReference>
<dbReference type="RefSeq" id="NP_001278439.1">
    <molecule id="Q5H9U9-2"/>
    <property type="nucleotide sequence ID" value="NM_001291510.2"/>
</dbReference>
<dbReference type="RefSeq" id="XP_047272355.1">
    <molecule id="Q5H9U9-1"/>
    <property type="nucleotide sequence ID" value="XM_047416399.1"/>
</dbReference>
<dbReference type="BioGRID" id="124817">
    <property type="interactions" value="26"/>
</dbReference>
<dbReference type="FunCoup" id="Q5H9U9">
    <property type="interactions" value="274"/>
</dbReference>
<dbReference type="IntAct" id="Q5H9U9">
    <property type="interactions" value="7"/>
</dbReference>
<dbReference type="STRING" id="9606.ENSP00000260184"/>
<dbReference type="CarbonylDB" id="Q5H9U9"/>
<dbReference type="iPTMnet" id="Q5H9U9"/>
<dbReference type="PhosphoSitePlus" id="Q5H9U9"/>
<dbReference type="BioMuta" id="DDX60L"/>
<dbReference type="DMDM" id="327478505"/>
<dbReference type="jPOST" id="Q5H9U9"/>
<dbReference type="MassIVE" id="Q5H9U9"/>
<dbReference type="PaxDb" id="9606-ENSP00000260184"/>
<dbReference type="PeptideAtlas" id="Q5H9U9"/>
<dbReference type="ProteomicsDB" id="62912">
    <molecule id="Q5H9U9-1"/>
</dbReference>
<dbReference type="ProteomicsDB" id="62913">
    <molecule id="Q5H9U9-2"/>
</dbReference>
<dbReference type="Pumba" id="Q5H9U9"/>
<dbReference type="Antibodypedia" id="49338">
    <property type="antibodies" value="74 antibodies from 13 providers"/>
</dbReference>
<dbReference type="DNASU" id="91351"/>
<dbReference type="Ensembl" id="ENST00000505890.5">
    <molecule id="Q5H9U9-2"/>
    <property type="protein sequence ID" value="ENSP00000422202.1"/>
    <property type="gene ID" value="ENSG00000181381.15"/>
</dbReference>
<dbReference type="Ensembl" id="ENST00000511577.5">
    <molecule id="Q5H9U9-1"/>
    <property type="protein sequence ID" value="ENSP00000422423.1"/>
    <property type="gene ID" value="ENSG00000181381.15"/>
</dbReference>
<dbReference type="Ensembl" id="ENST00000682922.1">
    <molecule id="Q5H9U9-1"/>
    <property type="protein sequence ID" value="ENSP00000507872.1"/>
    <property type="gene ID" value="ENSG00000181381.15"/>
</dbReference>
<dbReference type="GeneID" id="91351"/>
<dbReference type="KEGG" id="hsa:91351"/>
<dbReference type="MANE-Select" id="ENST00000682922.1">
    <property type="protein sequence ID" value="ENSP00000507872.1"/>
    <property type="RefSeq nucleotide sequence ID" value="NM_001012967.3"/>
    <property type="RefSeq protein sequence ID" value="NP_001012985.2"/>
</dbReference>
<dbReference type="UCSC" id="uc003irq.5">
    <molecule id="Q5H9U9-1"/>
    <property type="organism name" value="human"/>
</dbReference>
<dbReference type="AGR" id="HGNC:26429"/>
<dbReference type="CTD" id="91351"/>
<dbReference type="DisGeNET" id="91351"/>
<dbReference type="GeneCards" id="DDX60L"/>
<dbReference type="HGNC" id="HGNC:26429">
    <property type="gene designation" value="DDX60L"/>
</dbReference>
<dbReference type="HPA" id="ENSG00000181381">
    <property type="expression patterns" value="Tissue enhanced (bone)"/>
</dbReference>
<dbReference type="neXtProt" id="NX_Q5H9U9"/>
<dbReference type="OpenTargets" id="ENSG00000181381"/>
<dbReference type="PharmGKB" id="PA162383445"/>
<dbReference type="VEuPathDB" id="HostDB:ENSG00000181381"/>
<dbReference type="eggNOG" id="KOG0949">
    <property type="taxonomic scope" value="Eukaryota"/>
</dbReference>
<dbReference type="eggNOG" id="KOG0950">
    <property type="taxonomic scope" value="Eukaryota"/>
</dbReference>
<dbReference type="GeneTree" id="ENSGT00940000164328"/>
<dbReference type="HOGENOM" id="CLU_002305_0_0_1"/>
<dbReference type="InParanoid" id="Q5H9U9"/>
<dbReference type="OMA" id="ITYSWLW"/>
<dbReference type="OrthoDB" id="64767at2759"/>
<dbReference type="PAN-GO" id="Q5H9U9">
    <property type="GO annotations" value="4 GO annotations based on evolutionary models"/>
</dbReference>
<dbReference type="PhylomeDB" id="Q5H9U9"/>
<dbReference type="TreeFam" id="TF314846"/>
<dbReference type="PathwayCommons" id="Q5H9U9"/>
<dbReference type="SignaLink" id="Q5H9U9"/>
<dbReference type="BioGRID-ORCS" id="91351">
    <property type="hits" value="5 hits in 1158 CRISPR screens"/>
</dbReference>
<dbReference type="ChiTaRS" id="DDX60L">
    <property type="organism name" value="human"/>
</dbReference>
<dbReference type="GenomeRNAi" id="91351"/>
<dbReference type="Pharos" id="Q5H9U9">
    <property type="development level" value="Tdark"/>
</dbReference>
<dbReference type="PRO" id="PR:Q5H9U9"/>
<dbReference type="Proteomes" id="UP000005640">
    <property type="component" value="Chromosome 4"/>
</dbReference>
<dbReference type="RNAct" id="Q5H9U9">
    <property type="molecule type" value="protein"/>
</dbReference>
<dbReference type="Bgee" id="ENSG00000181381">
    <property type="expression patterns" value="Expressed in monocyte and 165 other cell types or tissues"/>
</dbReference>
<dbReference type="ExpressionAtlas" id="Q5H9U9">
    <property type="expression patterns" value="baseline and differential"/>
</dbReference>
<dbReference type="GO" id="GO:0005737">
    <property type="term" value="C:cytoplasm"/>
    <property type="evidence" value="ECO:0000318"/>
    <property type="project" value="GO_Central"/>
</dbReference>
<dbReference type="GO" id="GO:0005524">
    <property type="term" value="F:ATP binding"/>
    <property type="evidence" value="ECO:0007669"/>
    <property type="project" value="UniProtKB-KW"/>
</dbReference>
<dbReference type="GO" id="GO:0016887">
    <property type="term" value="F:ATP hydrolysis activity"/>
    <property type="evidence" value="ECO:0007669"/>
    <property type="project" value="RHEA"/>
</dbReference>
<dbReference type="GO" id="GO:0003725">
    <property type="term" value="F:double-stranded RNA binding"/>
    <property type="evidence" value="ECO:0000318"/>
    <property type="project" value="GO_Central"/>
</dbReference>
<dbReference type="GO" id="GO:0003724">
    <property type="term" value="F:RNA helicase activity"/>
    <property type="evidence" value="ECO:0007669"/>
    <property type="project" value="UniProtKB-EC"/>
</dbReference>
<dbReference type="GO" id="GO:0003727">
    <property type="term" value="F:single-stranded RNA binding"/>
    <property type="evidence" value="ECO:0000318"/>
    <property type="project" value="GO_Central"/>
</dbReference>
<dbReference type="GO" id="GO:0051607">
    <property type="term" value="P:defense response to virus"/>
    <property type="evidence" value="ECO:0000318"/>
    <property type="project" value="GO_Central"/>
</dbReference>
<dbReference type="FunFam" id="3.40.50.300:FF:001039">
    <property type="entry name" value="ATP-dependent RNA helicase DDX60"/>
    <property type="match status" value="1"/>
</dbReference>
<dbReference type="Gene3D" id="3.40.50.300">
    <property type="entry name" value="P-loop containing nucleotide triphosphate hydrolases"/>
    <property type="match status" value="2"/>
</dbReference>
<dbReference type="InterPro" id="IPR011545">
    <property type="entry name" value="DEAD/DEAH_box_helicase_dom"/>
</dbReference>
<dbReference type="InterPro" id="IPR014001">
    <property type="entry name" value="Helicase_ATP-bd"/>
</dbReference>
<dbReference type="InterPro" id="IPR001650">
    <property type="entry name" value="Helicase_C-like"/>
</dbReference>
<dbReference type="InterPro" id="IPR027417">
    <property type="entry name" value="P-loop_NTPase"/>
</dbReference>
<dbReference type="InterPro" id="IPR055124">
    <property type="entry name" value="PIN-like_DDX60"/>
</dbReference>
<dbReference type="InterPro" id="IPR052431">
    <property type="entry name" value="SKI2_subfamily_helicases"/>
</dbReference>
<dbReference type="PANTHER" id="PTHR44533:SF1">
    <property type="entry name" value="ATP-DEPENDENT RNA HELICASE DDX60-LIKE-RELATED"/>
    <property type="match status" value="1"/>
</dbReference>
<dbReference type="PANTHER" id="PTHR44533">
    <property type="entry name" value="DEAD/H RNA HELICASE, PUTATIVE-RELATED"/>
    <property type="match status" value="1"/>
</dbReference>
<dbReference type="Pfam" id="PF00270">
    <property type="entry name" value="DEAD"/>
    <property type="match status" value="1"/>
</dbReference>
<dbReference type="Pfam" id="PF00271">
    <property type="entry name" value="Helicase_C"/>
    <property type="match status" value="1"/>
</dbReference>
<dbReference type="Pfam" id="PF23002">
    <property type="entry name" value="PIN-like_DDX60"/>
    <property type="match status" value="1"/>
</dbReference>
<dbReference type="SMART" id="SM00487">
    <property type="entry name" value="DEXDc"/>
    <property type="match status" value="1"/>
</dbReference>
<dbReference type="SMART" id="SM00490">
    <property type="entry name" value="HELICc"/>
    <property type="match status" value="1"/>
</dbReference>
<dbReference type="SUPFAM" id="SSF52540">
    <property type="entry name" value="P-loop containing nucleoside triphosphate hydrolases"/>
    <property type="match status" value="1"/>
</dbReference>
<dbReference type="PROSITE" id="PS51192">
    <property type="entry name" value="HELICASE_ATP_BIND_1"/>
    <property type="match status" value="1"/>
</dbReference>
<dbReference type="PROSITE" id="PS51194">
    <property type="entry name" value="HELICASE_CTER"/>
    <property type="match status" value="1"/>
</dbReference>
<keyword id="KW-0025">Alternative splicing</keyword>
<keyword id="KW-0067">ATP-binding</keyword>
<keyword id="KW-0347">Helicase</keyword>
<keyword id="KW-0378">Hydrolase</keyword>
<keyword id="KW-0547">Nucleotide-binding</keyword>
<keyword id="KW-1267">Proteomics identification</keyword>
<keyword id="KW-1185">Reference proteome</keyword>
<keyword id="KW-0694">RNA-binding</keyword>
<sequence length="1706" mass="197614">MGSKDHAVFFREMTQLILNEMPKAGYSSILNDFVESNFFVIDGDSLLVTCLGVKSFKWGQNLHFFYLVECYLVDLLSNGGQFTIVFFKDAEYAYFDFPELLSLRTALILHLQHNTNIDVQTEFSGCLSQDWKLFLEQHYPYFLIVSEEGLSDLQTYLFNFLIIHSWGMKVNVVLSSGHESDTLRFYAYTMESTDRNQTFSKENETVIQSAYKSLIQHLEEIRVLVLATHFEHLKWNDMMEEAYQTLFLLQHLWSEGSDIQRVLCVTSCSLSLRMYHRVLVHSNCLSLQEVEDFCRLRCLCVAFQLHLPLSQRACSRVITCSWIRNSDSFLKMNKWCEYFILSNLNVFGCWNLNLNHVSDLYDEQLLKNIAFYYEFESTQEPHLNLGDSIRRDYEDLWNVVSHLVKEFNVGKSFPLRTTRRHFLRQEKSVIQEISLEKMPSVGFIPMTSAVIDEFVGDMMKDLPILKSDDPVVPSLFKQKTSDELLHWHAQRLLSDDYDRIKCHVDEQSRDPHVLDFLKKIQDYQQFYGKSLESISTKVIVTQTTRPKEDSSGASGEILQNTKPHQITKKSKKKSFLKEDQNKAQQNDDLLFSIEEEMKNNLHSGIRKLEDYLTSCASNSVKFGVEMLGLIACFKAWKKHCRGEGKISKDLSIAVQMMKRIHSLLERYPEILEAEHHQYIAKCLKYLGFNDLANSLDPTLIGDDKNKKKYSIDIGPARFQLQYMGHYLIRDERKDRDPRVQDFIPNAWQQELLDVVDKNESAVIVAPTSSGKTYASYYCMEKVLRESDVGVVVYVAPAKSLVGQVAATVENRFTKTLPAGRTLCGAFTRDYCHNVLNCQVLITVPECFEILLLAPHRQKWVERIRYVIFDEVHYLGREVGAKFWELLLVIIRCPFLVLSATINNPNLLTKWLQSVKQYWKQADKIMEEKCISEKQADKCLNFLQDHSYKNQSYEVRLVLCGERYNDLEKHICSVKHDDVYFDHFHPCAALTTDIIEKYGFPPDLTLTPQESIQLYDTMAQVWETWPRAQELCPEEFILFKNKIVIKKLDARKYEENLKAELTNWIKNGQVKKVKRVLKNLSPDSLSSSKDMVKMFPLLVEKLRQMDKLPAIFFLFKNDDVGKRAGSVCTFLEKTETKSHPHTECHSYVFAIDEVLEKVRKTQKRITKKNPKKAEKLERKKVYRAEYINFLENLKILEISEDCTYADVKALHTEITRNKDSTLERVLPRVRFTRHGKELKALAQRGIGYHHSSMYFKEKEFVEILFVKGLIRVVTATETLALGIHMPCKSVVFAQDSVYLDALNYRQMSGRAGRRGQDLLGNVYFFDIPLPKIKRLLASSVPELRGQFPLSITLVLRLMLLASKGDDPEDAKAKVLSVLKHSLLSFKRRRAMETLKLYFLFSLQLLIKEDYLNKKGNPKKFAGLASYLHGHEPSNLVFVNFLKRGLFHNLCKPAWKGSQQFSQDVMEKLVLVLANLFGRKYIPAKFQNANLSFSQSKVILAELPEDFKAALYEYNLAVMKDFASFLLIASKSVNMKKEHQLPLSRIKFTGKECEDSQLVSHLMSCKKGRVAISPFVCLSGNTDNDLLRPETINQVILRTVGVSGTQAPLLWPWKLDNRGRRMPLNAYVLNFYKHNCLTRLDQKNGMRMGQLLKCLKDFAFNIQAISDSLSELCENKRDNVVLAFKQLSQTFYEKLQEMQIQMSQNHLE</sequence>
<evidence type="ECO:0000255" key="1">
    <source>
        <dbReference type="PROSITE-ProRule" id="PRU00541"/>
    </source>
</evidence>
<evidence type="ECO:0000255" key="2">
    <source>
        <dbReference type="PROSITE-ProRule" id="PRU00542"/>
    </source>
</evidence>
<evidence type="ECO:0000256" key="3">
    <source>
        <dbReference type="SAM" id="MobiDB-lite"/>
    </source>
</evidence>
<evidence type="ECO:0000303" key="4">
    <source>
    </source>
</evidence>
<evidence type="ECO:0000303" key="5">
    <source>
    </source>
</evidence>
<evidence type="ECO:0000305" key="6"/>
<evidence type="ECO:0000312" key="7">
    <source>
        <dbReference type="HGNC" id="HGNC:26429"/>
    </source>
</evidence>
<reference key="1">
    <citation type="journal article" date="2007" name="BMC Genomics">
        <title>The full-ORF clone resource of the German cDNA consortium.</title>
        <authorList>
            <person name="Bechtel S."/>
            <person name="Rosenfelder H."/>
            <person name="Duda A."/>
            <person name="Schmidt C.P."/>
            <person name="Ernst U."/>
            <person name="Wellenreuther R."/>
            <person name="Mehrle A."/>
            <person name="Schuster C."/>
            <person name="Bahr A."/>
            <person name="Bloecker H."/>
            <person name="Heubner D."/>
            <person name="Hoerlein A."/>
            <person name="Michel G."/>
            <person name="Wedler H."/>
            <person name="Koehrer K."/>
            <person name="Ottenwaelder B."/>
            <person name="Poustka A."/>
            <person name="Wiemann S."/>
            <person name="Schupp I."/>
        </authorList>
    </citation>
    <scope>NUCLEOTIDE SEQUENCE [LARGE SCALE MRNA] (ISOFORM 2)</scope>
    <scope>NUCLEOTIDE SEQUENCE [LARGE SCALE MRNA] OF 887-1706 (ISOFORM 1)</scope>
    <source>
        <tissue>Testis carcinoma</tissue>
    </source>
</reference>
<reference key="2">
    <citation type="journal article" date="2005" name="Nature">
        <title>Generation and annotation of the DNA sequences of human chromosomes 2 and 4.</title>
        <authorList>
            <person name="Hillier L.W."/>
            <person name="Graves T.A."/>
            <person name="Fulton R.S."/>
            <person name="Fulton L.A."/>
            <person name="Pepin K.H."/>
            <person name="Minx P."/>
            <person name="Wagner-McPherson C."/>
            <person name="Layman D."/>
            <person name="Wylie K."/>
            <person name="Sekhon M."/>
            <person name="Becker M.C."/>
            <person name="Fewell G.A."/>
            <person name="Delehaunty K.D."/>
            <person name="Miner T.L."/>
            <person name="Nash W.E."/>
            <person name="Kremitzki C."/>
            <person name="Oddy L."/>
            <person name="Du H."/>
            <person name="Sun H."/>
            <person name="Bradshaw-Cordum H."/>
            <person name="Ali J."/>
            <person name="Carter J."/>
            <person name="Cordes M."/>
            <person name="Harris A."/>
            <person name="Isak A."/>
            <person name="van Brunt A."/>
            <person name="Nguyen C."/>
            <person name="Du F."/>
            <person name="Courtney L."/>
            <person name="Kalicki J."/>
            <person name="Ozersky P."/>
            <person name="Abbott S."/>
            <person name="Armstrong J."/>
            <person name="Belter E.A."/>
            <person name="Caruso L."/>
            <person name="Cedroni M."/>
            <person name="Cotton M."/>
            <person name="Davidson T."/>
            <person name="Desai A."/>
            <person name="Elliott G."/>
            <person name="Erb T."/>
            <person name="Fronick C."/>
            <person name="Gaige T."/>
            <person name="Haakenson W."/>
            <person name="Haglund K."/>
            <person name="Holmes A."/>
            <person name="Harkins R."/>
            <person name="Kim K."/>
            <person name="Kruchowski S.S."/>
            <person name="Strong C.M."/>
            <person name="Grewal N."/>
            <person name="Goyea E."/>
            <person name="Hou S."/>
            <person name="Levy A."/>
            <person name="Martinka S."/>
            <person name="Mead K."/>
            <person name="McLellan M.D."/>
            <person name="Meyer R."/>
            <person name="Randall-Maher J."/>
            <person name="Tomlinson C."/>
            <person name="Dauphin-Kohlberg S."/>
            <person name="Kozlowicz-Reilly A."/>
            <person name="Shah N."/>
            <person name="Swearengen-Shahid S."/>
            <person name="Snider J."/>
            <person name="Strong J.T."/>
            <person name="Thompson J."/>
            <person name="Yoakum M."/>
            <person name="Leonard S."/>
            <person name="Pearman C."/>
            <person name="Trani L."/>
            <person name="Radionenko M."/>
            <person name="Waligorski J.E."/>
            <person name="Wang C."/>
            <person name="Rock S.M."/>
            <person name="Tin-Wollam A.-M."/>
            <person name="Maupin R."/>
            <person name="Latreille P."/>
            <person name="Wendl M.C."/>
            <person name="Yang S.-P."/>
            <person name="Pohl C."/>
            <person name="Wallis J.W."/>
            <person name="Spieth J."/>
            <person name="Bieri T.A."/>
            <person name="Berkowicz N."/>
            <person name="Nelson J.O."/>
            <person name="Osborne J."/>
            <person name="Ding L."/>
            <person name="Meyer R."/>
            <person name="Sabo A."/>
            <person name="Shotland Y."/>
            <person name="Sinha P."/>
            <person name="Wohldmann P.E."/>
            <person name="Cook L.L."/>
            <person name="Hickenbotham M.T."/>
            <person name="Eldred J."/>
            <person name="Williams D."/>
            <person name="Jones T.A."/>
            <person name="She X."/>
            <person name="Ciccarelli F.D."/>
            <person name="Izaurralde E."/>
            <person name="Taylor J."/>
            <person name="Schmutz J."/>
            <person name="Myers R.M."/>
            <person name="Cox D.R."/>
            <person name="Huang X."/>
            <person name="McPherson J.D."/>
            <person name="Mardis E.R."/>
            <person name="Clifton S.W."/>
            <person name="Warren W.C."/>
            <person name="Chinwalla A.T."/>
            <person name="Eddy S.R."/>
            <person name="Marra M.A."/>
            <person name="Ovcharenko I."/>
            <person name="Furey T.S."/>
            <person name="Miller W."/>
            <person name="Eichler E.E."/>
            <person name="Bork P."/>
            <person name="Suyama M."/>
            <person name="Torrents D."/>
            <person name="Waterston R.H."/>
            <person name="Wilson R.K."/>
        </authorList>
    </citation>
    <scope>NUCLEOTIDE SEQUENCE [LARGE SCALE GENOMIC DNA]</scope>
</reference>
<reference key="3">
    <citation type="journal article" date="2004" name="Nat. Genet.">
        <title>Complete sequencing and characterization of 21,243 full-length human cDNAs.</title>
        <authorList>
            <person name="Ota T."/>
            <person name="Suzuki Y."/>
            <person name="Nishikawa T."/>
            <person name="Otsuki T."/>
            <person name="Sugiyama T."/>
            <person name="Irie R."/>
            <person name="Wakamatsu A."/>
            <person name="Hayashi K."/>
            <person name="Sato H."/>
            <person name="Nagai K."/>
            <person name="Kimura K."/>
            <person name="Makita H."/>
            <person name="Sekine M."/>
            <person name="Obayashi M."/>
            <person name="Nishi T."/>
            <person name="Shibahara T."/>
            <person name="Tanaka T."/>
            <person name="Ishii S."/>
            <person name="Yamamoto J."/>
            <person name="Saito K."/>
            <person name="Kawai Y."/>
            <person name="Isono Y."/>
            <person name="Nakamura Y."/>
            <person name="Nagahari K."/>
            <person name="Murakami K."/>
            <person name="Yasuda T."/>
            <person name="Iwayanagi T."/>
            <person name="Wagatsuma M."/>
            <person name="Shiratori A."/>
            <person name="Sudo H."/>
            <person name="Hosoiri T."/>
            <person name="Kaku Y."/>
            <person name="Kodaira H."/>
            <person name="Kondo H."/>
            <person name="Sugawara M."/>
            <person name="Takahashi M."/>
            <person name="Kanda K."/>
            <person name="Yokoi T."/>
            <person name="Furuya T."/>
            <person name="Kikkawa E."/>
            <person name="Omura Y."/>
            <person name="Abe K."/>
            <person name="Kamihara K."/>
            <person name="Katsuta N."/>
            <person name="Sato K."/>
            <person name="Tanikawa M."/>
            <person name="Yamazaki M."/>
            <person name="Ninomiya K."/>
            <person name="Ishibashi T."/>
            <person name="Yamashita H."/>
            <person name="Murakawa K."/>
            <person name="Fujimori K."/>
            <person name="Tanai H."/>
            <person name="Kimata M."/>
            <person name="Watanabe M."/>
            <person name="Hiraoka S."/>
            <person name="Chiba Y."/>
            <person name="Ishida S."/>
            <person name="Ono Y."/>
            <person name="Takiguchi S."/>
            <person name="Watanabe S."/>
            <person name="Yosida M."/>
            <person name="Hotuta T."/>
            <person name="Kusano J."/>
            <person name="Kanehori K."/>
            <person name="Takahashi-Fujii A."/>
            <person name="Hara H."/>
            <person name="Tanase T.-O."/>
            <person name="Nomura Y."/>
            <person name="Togiya S."/>
            <person name="Komai F."/>
            <person name="Hara R."/>
            <person name="Takeuchi K."/>
            <person name="Arita M."/>
            <person name="Imose N."/>
            <person name="Musashino K."/>
            <person name="Yuuki H."/>
            <person name="Oshima A."/>
            <person name="Sasaki N."/>
            <person name="Aotsuka S."/>
            <person name="Yoshikawa Y."/>
            <person name="Matsunawa H."/>
            <person name="Ichihara T."/>
            <person name="Shiohata N."/>
            <person name="Sano S."/>
            <person name="Moriya S."/>
            <person name="Momiyama H."/>
            <person name="Satoh N."/>
            <person name="Takami S."/>
            <person name="Terashima Y."/>
            <person name="Suzuki O."/>
            <person name="Nakagawa S."/>
            <person name="Senoh A."/>
            <person name="Mizoguchi H."/>
            <person name="Goto Y."/>
            <person name="Shimizu F."/>
            <person name="Wakebe H."/>
            <person name="Hishigaki H."/>
            <person name="Watanabe T."/>
            <person name="Sugiyama A."/>
            <person name="Takemoto M."/>
            <person name="Kawakami B."/>
            <person name="Yamazaki M."/>
            <person name="Watanabe K."/>
            <person name="Kumagai A."/>
            <person name="Itakura S."/>
            <person name="Fukuzumi Y."/>
            <person name="Fujimori Y."/>
            <person name="Komiyama M."/>
            <person name="Tashiro H."/>
            <person name="Tanigami A."/>
            <person name="Fujiwara T."/>
            <person name="Ono T."/>
            <person name="Yamada K."/>
            <person name="Fujii Y."/>
            <person name="Ozaki K."/>
            <person name="Hirao M."/>
            <person name="Ohmori Y."/>
            <person name="Kawabata A."/>
            <person name="Hikiji T."/>
            <person name="Kobatake N."/>
            <person name="Inagaki H."/>
            <person name="Ikema Y."/>
            <person name="Okamoto S."/>
            <person name="Okitani R."/>
            <person name="Kawakami T."/>
            <person name="Noguchi S."/>
            <person name="Itoh T."/>
            <person name="Shigeta K."/>
            <person name="Senba T."/>
            <person name="Matsumura K."/>
            <person name="Nakajima Y."/>
            <person name="Mizuno T."/>
            <person name="Morinaga M."/>
            <person name="Sasaki M."/>
            <person name="Togashi T."/>
            <person name="Oyama M."/>
            <person name="Hata H."/>
            <person name="Watanabe M."/>
            <person name="Komatsu T."/>
            <person name="Mizushima-Sugano J."/>
            <person name="Satoh T."/>
            <person name="Shirai Y."/>
            <person name="Takahashi Y."/>
            <person name="Nakagawa K."/>
            <person name="Okumura K."/>
            <person name="Nagase T."/>
            <person name="Nomura N."/>
            <person name="Kikuchi H."/>
            <person name="Masuho Y."/>
            <person name="Yamashita R."/>
            <person name="Nakai K."/>
            <person name="Yada T."/>
            <person name="Nakamura Y."/>
            <person name="Ohara O."/>
            <person name="Isogai T."/>
            <person name="Sugano S."/>
        </authorList>
    </citation>
    <scope>NUCLEOTIDE SEQUENCE [LARGE SCALE MRNA] OF 419-1165 (ISOFORM 2)</scope>
</reference>
<gene>
    <name evidence="7" type="primary">DDX60L</name>
</gene>
<comment type="catalytic activity">
    <reaction>
        <text>ATP + H2O = ADP + phosphate + H(+)</text>
        <dbReference type="Rhea" id="RHEA:13065"/>
        <dbReference type="ChEBI" id="CHEBI:15377"/>
        <dbReference type="ChEBI" id="CHEBI:15378"/>
        <dbReference type="ChEBI" id="CHEBI:30616"/>
        <dbReference type="ChEBI" id="CHEBI:43474"/>
        <dbReference type="ChEBI" id="CHEBI:456216"/>
        <dbReference type="EC" id="3.6.4.13"/>
    </reaction>
</comment>
<comment type="alternative products">
    <event type="alternative splicing"/>
    <isoform>
        <id>Q5H9U9-1</id>
        <name>1</name>
        <sequence type="displayed"/>
    </isoform>
    <isoform>
        <id>Q5H9U9-2</id>
        <name>2</name>
        <sequence type="described" ref="VSP_040820 VSP_040821 VSP_040822"/>
    </isoform>
</comment>
<comment type="similarity">
    <text evidence="6">Belongs to the helicase family.</text>
</comment>
<comment type="sequence caution" evidence="6">
    <conflict type="erroneous initiation">
        <sequence resource="EMBL-CDS" id="BAB70966"/>
    </conflict>
    <text>Truncated N-terminus.</text>
</comment>
<organism>
    <name type="scientific">Homo sapiens</name>
    <name type="common">Human</name>
    <dbReference type="NCBI Taxonomy" id="9606"/>
    <lineage>
        <taxon>Eukaryota</taxon>
        <taxon>Metazoa</taxon>
        <taxon>Chordata</taxon>
        <taxon>Craniata</taxon>
        <taxon>Vertebrata</taxon>
        <taxon>Euteleostomi</taxon>
        <taxon>Mammalia</taxon>
        <taxon>Eutheria</taxon>
        <taxon>Euarchontoglires</taxon>
        <taxon>Primates</taxon>
        <taxon>Haplorrhini</taxon>
        <taxon>Catarrhini</taxon>
        <taxon>Hominidae</taxon>
        <taxon>Homo</taxon>
    </lineage>
</organism>
<accession>Q5H9U9</accession>
<accession>A0A804HKC9</accession>
<accession>Q96ND6</accession>
<proteinExistence type="evidence at protein level"/>
<feature type="chain" id="PRO_0000318155" description="Probable ATP-dependent RNA helicase DDX60-like">
    <location>
        <begin position="1"/>
        <end position="1706"/>
    </location>
</feature>
<feature type="domain" description="Helicase ATP-binding" evidence="1">
    <location>
        <begin position="752"/>
        <end position="919"/>
    </location>
</feature>
<feature type="domain" description="Helicase C-terminal" evidence="2">
    <location>
        <begin position="1205"/>
        <end position="1354"/>
    </location>
</feature>
<feature type="region of interest" description="Disordered" evidence="3">
    <location>
        <begin position="545"/>
        <end position="580"/>
    </location>
</feature>
<feature type="short sequence motif" description="DEAH box">
    <location>
        <begin position="869"/>
        <end position="872"/>
    </location>
</feature>
<feature type="compositionally biased region" description="Polar residues" evidence="3">
    <location>
        <begin position="551"/>
        <end position="564"/>
    </location>
</feature>
<feature type="compositionally biased region" description="Basic residues" evidence="3">
    <location>
        <begin position="565"/>
        <end position="574"/>
    </location>
</feature>
<feature type="binding site" evidence="1">
    <location>
        <begin position="765"/>
        <end position="772"/>
    </location>
    <ligand>
        <name>ATP</name>
        <dbReference type="ChEBI" id="CHEBI:30616"/>
    </ligand>
</feature>
<feature type="splice variant" id="VSP_040820" description="In isoform 2." evidence="4 5">
    <original>I</original>
    <variation>IS</variation>
    <location>
        <position position="1164"/>
    </location>
</feature>
<feature type="splice variant" id="VSP_040821" description="In isoform 2." evidence="4 5">
    <original>MS</original>
    <variation>IM</variation>
    <location>
        <begin position="1306"/>
        <end position="1307"/>
    </location>
</feature>
<feature type="splice variant" id="VSP_040822" description="In isoform 2." evidence="4 5">
    <location>
        <begin position="1308"/>
        <end position="1706"/>
    </location>
</feature>
<feature type="sequence variant" id="VAR_055897" description="In dbSNP:rs12507582.">
    <original>C</original>
    <variation>Y</variation>
    <location>
        <position position="336"/>
    </location>
</feature>
<feature type="sequence variant" id="VAR_055898" description="In dbSNP:rs10029536.">
    <original>N</original>
    <variation>K</variation>
    <location>
        <position position="355"/>
    </location>
</feature>
<feature type="sequence variant" id="VAR_055899" description="In dbSNP:rs13151700.">
    <original>V</original>
    <variation>L</variation>
    <location>
        <position position="409"/>
    </location>
</feature>
<feature type="sequence variant" id="VAR_055900" description="In dbSNP:rs2319850.">
    <original>A</original>
    <variation>T</variation>
    <location>
        <position position="583"/>
    </location>
</feature>
<feature type="sequence variant" id="VAR_055901" description="In dbSNP:rs17540213.">
    <original>S</original>
    <variation>C</variation>
    <location>
        <position position="1080"/>
    </location>
</feature>
<feature type="sequence conflict" description="In Ref. 1; CAI45925." evidence="6" ref="1">
    <original>F</original>
    <variation>L</variation>
    <location>
        <position position="134"/>
    </location>
</feature>
<feature type="sequence conflict" description="In Ref. 3; BAB70966." evidence="6" ref="3">
    <original>L</original>
    <variation>P</variation>
    <location>
        <position position="822"/>
    </location>
</feature>
<feature type="sequence conflict" description="In Ref. 1; CAI45925 and 3; BAB70966." evidence="6" ref="1 3">
    <original>C</original>
    <variation>R</variation>
    <location>
        <position position="831"/>
    </location>
</feature>
<feature type="sequence conflict" description="In Ref. 1; CAI45925." evidence="6" ref="1">
    <original>C</original>
    <variation>Y</variation>
    <location>
        <position position="959"/>
    </location>
</feature>
<feature type="sequence conflict" description="In Ref. 1; AL832950." evidence="6" ref="1">
    <original>E</original>
    <variation>D</variation>
    <location>
        <position position="1222"/>
    </location>
</feature>
<feature type="sequence conflict" description="In Ref. 1; AL832950." evidence="6" ref="1">
    <original>N</original>
    <variation>D</variation>
    <location>
        <position position="1488"/>
    </location>
</feature>
<feature type="sequence conflict" description="In Ref. 1; AL832950." evidence="6" ref="1">
    <original>M</original>
    <variation>V</variation>
    <location>
        <position position="1646"/>
    </location>
</feature>
<protein>
    <recommendedName>
        <fullName evidence="6">Probable ATP-dependent RNA helicase DDX60-like</fullName>
        <ecNumber>3.6.4.13</ecNumber>
    </recommendedName>
    <alternativeName>
        <fullName>DEAD box protein 60-like</fullName>
    </alternativeName>
</protein>